<feature type="signal peptide" evidence="2">
    <location>
        <begin position="1"/>
        <end position="16"/>
    </location>
</feature>
<feature type="propeptide" id="PRO_0000446640" description="Removed in mature form" evidence="1">
    <location>
        <begin position="17"/>
        <end position="190"/>
    </location>
</feature>
<feature type="chain" id="PRO_0000446641" description="Tripeptidyl-peptidase 1" evidence="2">
    <location>
        <begin position="191"/>
        <end position="557"/>
    </location>
</feature>
<feature type="domain" description="Peptidase S53" evidence="4">
    <location>
        <begin position="194"/>
        <end position="557"/>
    </location>
</feature>
<feature type="active site" description="Charge relay system" evidence="4">
    <location>
        <position position="266"/>
    </location>
</feature>
<feature type="active site" description="Charge relay system" evidence="4">
    <location>
        <position position="270"/>
    </location>
</feature>
<feature type="active site" description="Charge relay system" evidence="4">
    <location>
        <position position="470"/>
    </location>
</feature>
<feature type="binding site" evidence="1">
    <location>
        <position position="512"/>
    </location>
    <ligand>
        <name>Ca(2+)</name>
        <dbReference type="ChEBI" id="CHEBI:29108"/>
    </ligand>
</feature>
<feature type="binding site" evidence="1">
    <location>
        <position position="513"/>
    </location>
    <ligand>
        <name>Ca(2+)</name>
        <dbReference type="ChEBI" id="CHEBI:29108"/>
    </ligand>
</feature>
<feature type="binding site" evidence="1">
    <location>
        <position position="538"/>
    </location>
    <ligand>
        <name>Ca(2+)</name>
        <dbReference type="ChEBI" id="CHEBI:29108"/>
    </ligand>
</feature>
<feature type="glycosylation site" description="N-linked (GlcNAc...) asparagine" evidence="3">
    <location>
        <position position="53"/>
    </location>
</feature>
<feature type="glycosylation site" description="N-linked (GlcNAc...) asparagine" evidence="3">
    <location>
        <position position="205"/>
    </location>
</feature>
<feature type="glycosylation site" description="N-linked (GlcNAc...) asparagine" evidence="3">
    <location>
        <position position="216"/>
    </location>
</feature>
<feature type="glycosylation site" description="N-linked (GlcNAc...) asparagine" evidence="3">
    <location>
        <position position="280"/>
    </location>
</feature>
<feature type="glycosylation site" description="N-linked (GlcNAc...) asparagine" evidence="3">
    <location>
        <position position="307"/>
    </location>
</feature>
<feature type="glycosylation site" description="N-linked (GlcNAc...) asparagine" evidence="3">
    <location>
        <position position="438"/>
    </location>
</feature>
<feature type="disulfide bond" evidence="1">
    <location>
        <begin position="107"/>
        <end position="118"/>
    </location>
</feature>
<feature type="disulfide bond" evidence="1">
    <location>
        <begin position="359"/>
        <end position="521"/>
    </location>
</feature>
<feature type="disulfide bond" evidence="1">
    <location>
        <begin position="517"/>
        <end position="532"/>
    </location>
</feature>
<feature type="mutagenesis site" description="In sa0011; Lethality occurs from 4 days post-fertilization (dpf) onwards with no survival beyond 7 dpf. Severe developmental abnormalities are apparent from 48 hours post-fertilization (hpf) onwards including curved body, small head and a progressive reduction in eye size. At later stages there are signs of pericardial edema and the swim bladder is absent. Neurodegeneration is present in the retina, optic tectum and cerebellum, associated with increased apoptosis and reduced cell proliferation. Locomotor behavior is abnormal with increased movement, aberrant swimming patterns and a twitching phenotype. Significantly reduced peptidase activity and accumulation of the tpp1 substrate, subunit c of mitochondrial ATP synthase." evidence="5">
    <location>
        <begin position="40"/>
        <end position="557"/>
    </location>
</feature>
<feature type="mutagenesis site" description="In hu3587; Viable, with most animal surviving to 3 months of age." evidence="5">
    <location>
        <begin position="444"/>
        <end position="557"/>
    </location>
</feature>
<comment type="function">
    <text evidence="1 5">Lysosomal serine protease with tripeptidyl-peptidase I activity (PubMed:23587805). May act as a non-specific lysosomal peptidase which generates tripeptides from the breakdown products produced by lysosomal proteinases (By similarity). Requires substrates with an unsubstituted N-terminus (By similarity).</text>
</comment>
<comment type="catalytic activity">
    <reaction evidence="5">
        <text>Release of an N-terminal tripeptide from a polypeptide, but also has endopeptidase activity.</text>
        <dbReference type="EC" id="3.4.14.9"/>
    </reaction>
</comment>
<comment type="cofactor">
    <cofactor evidence="1">
        <name>Ca(2+)</name>
        <dbReference type="ChEBI" id="CHEBI:29108"/>
    </cofactor>
    <text evidence="1">Binds 1 Ca(2+) ion per subunit.</text>
</comment>
<comment type="subcellular location">
    <subcellularLocation>
        <location evidence="1">Lysosome</location>
    </subcellularLocation>
</comment>
<comment type="developmental stage">
    <text evidence="5">Expressed in retina at 48 hours post-fertilization (at protein level). Detected in all retinal cell layers but has particularly strong expression in the outer nuclear layer and ganglion cell layer (at protein level).</text>
</comment>
<comment type="PTM">
    <text evidence="1">Activated by autocatalytic proteolytical processing.</text>
</comment>
<comment type="disruption phenotype">
    <text evidence="5">Morpholino knockdown of the protein in embryos results in developmental defects from 48 hours post-fertilization onwards, including reduced eye and head size, a curved body, small jaw, and loss of the swim bladder.</text>
</comment>
<evidence type="ECO:0000250" key="1">
    <source>
        <dbReference type="UniProtKB" id="O14773"/>
    </source>
</evidence>
<evidence type="ECO:0000255" key="2"/>
<evidence type="ECO:0000255" key="3">
    <source>
        <dbReference type="PROSITE-ProRule" id="PRU00498"/>
    </source>
</evidence>
<evidence type="ECO:0000255" key="4">
    <source>
        <dbReference type="PROSITE-ProRule" id="PRU01032"/>
    </source>
</evidence>
<evidence type="ECO:0000269" key="5">
    <source>
    </source>
</evidence>
<evidence type="ECO:0000303" key="6">
    <source>
    </source>
</evidence>
<evidence type="ECO:0000305" key="7"/>
<evidence type="ECO:0000312" key="8">
    <source>
        <dbReference type="EMBL" id="AAI63102.1"/>
    </source>
</evidence>
<evidence type="ECO:0000312" key="9">
    <source>
        <dbReference type="Proteomes" id="UP000000437"/>
    </source>
</evidence>
<name>TPP1_DANRE</name>
<keyword id="KW-0068">Autocatalytic cleavage</keyword>
<keyword id="KW-0106">Calcium</keyword>
<keyword id="KW-1015">Disulfide bond</keyword>
<keyword id="KW-0325">Glycoprotein</keyword>
<keyword id="KW-0378">Hydrolase</keyword>
<keyword id="KW-0458">Lysosome</keyword>
<keyword id="KW-0479">Metal-binding</keyword>
<keyword id="KW-0645">Protease</keyword>
<keyword id="KW-1185">Reference proteome</keyword>
<keyword id="KW-0720">Serine protease</keyword>
<keyword id="KW-0732">Signal</keyword>
<keyword id="KW-0865">Zymogen</keyword>
<reference evidence="9" key="1">
    <citation type="journal article" date="2013" name="Nature">
        <title>The zebrafish reference genome sequence and its relationship to the human genome.</title>
        <authorList>
            <person name="Howe K."/>
            <person name="Clark M.D."/>
            <person name="Torroja C.F."/>
            <person name="Torrance J."/>
            <person name="Berthelot C."/>
            <person name="Muffato M."/>
            <person name="Collins J.E."/>
            <person name="Humphray S."/>
            <person name="McLaren K."/>
            <person name="Matthews L."/>
            <person name="McLaren S."/>
            <person name="Sealy I."/>
            <person name="Caccamo M."/>
            <person name="Churcher C."/>
            <person name="Scott C."/>
            <person name="Barrett J.C."/>
            <person name="Koch R."/>
            <person name="Rauch G.J."/>
            <person name="White S."/>
            <person name="Chow W."/>
            <person name="Kilian B."/>
            <person name="Quintais L.T."/>
            <person name="Guerra-Assuncao J.A."/>
            <person name="Zhou Y."/>
            <person name="Gu Y."/>
            <person name="Yen J."/>
            <person name="Vogel J.H."/>
            <person name="Eyre T."/>
            <person name="Redmond S."/>
            <person name="Banerjee R."/>
            <person name="Chi J."/>
            <person name="Fu B."/>
            <person name="Langley E."/>
            <person name="Maguire S.F."/>
            <person name="Laird G.K."/>
            <person name="Lloyd D."/>
            <person name="Kenyon E."/>
            <person name="Donaldson S."/>
            <person name="Sehra H."/>
            <person name="Almeida-King J."/>
            <person name="Loveland J."/>
            <person name="Trevanion S."/>
            <person name="Jones M."/>
            <person name="Quail M."/>
            <person name="Willey D."/>
            <person name="Hunt A."/>
            <person name="Burton J."/>
            <person name="Sims S."/>
            <person name="McLay K."/>
            <person name="Plumb B."/>
            <person name="Davis J."/>
            <person name="Clee C."/>
            <person name="Oliver K."/>
            <person name="Clark R."/>
            <person name="Riddle C."/>
            <person name="Elliot D."/>
            <person name="Threadgold G."/>
            <person name="Harden G."/>
            <person name="Ware D."/>
            <person name="Begum S."/>
            <person name="Mortimore B."/>
            <person name="Kerry G."/>
            <person name="Heath P."/>
            <person name="Phillimore B."/>
            <person name="Tracey A."/>
            <person name="Corby N."/>
            <person name="Dunn M."/>
            <person name="Johnson C."/>
            <person name="Wood J."/>
            <person name="Clark S."/>
            <person name="Pelan S."/>
            <person name="Griffiths G."/>
            <person name="Smith M."/>
            <person name="Glithero R."/>
            <person name="Howden P."/>
            <person name="Barker N."/>
            <person name="Lloyd C."/>
            <person name="Stevens C."/>
            <person name="Harley J."/>
            <person name="Holt K."/>
            <person name="Panagiotidis G."/>
            <person name="Lovell J."/>
            <person name="Beasley H."/>
            <person name="Henderson C."/>
            <person name="Gordon D."/>
            <person name="Auger K."/>
            <person name="Wright D."/>
            <person name="Collins J."/>
            <person name="Raisen C."/>
            <person name="Dyer L."/>
            <person name="Leung K."/>
            <person name="Robertson L."/>
            <person name="Ambridge K."/>
            <person name="Leongamornlert D."/>
            <person name="McGuire S."/>
            <person name="Gilderthorp R."/>
            <person name="Griffiths C."/>
            <person name="Manthravadi D."/>
            <person name="Nichol S."/>
            <person name="Barker G."/>
            <person name="Whitehead S."/>
            <person name="Kay M."/>
            <person name="Brown J."/>
            <person name="Murnane C."/>
            <person name="Gray E."/>
            <person name="Humphries M."/>
            <person name="Sycamore N."/>
            <person name="Barker D."/>
            <person name="Saunders D."/>
            <person name="Wallis J."/>
            <person name="Babbage A."/>
            <person name="Hammond S."/>
            <person name="Mashreghi-Mohammadi M."/>
            <person name="Barr L."/>
            <person name="Martin S."/>
            <person name="Wray P."/>
            <person name="Ellington A."/>
            <person name="Matthews N."/>
            <person name="Ellwood M."/>
            <person name="Woodmansey R."/>
            <person name="Clark G."/>
            <person name="Cooper J."/>
            <person name="Tromans A."/>
            <person name="Grafham D."/>
            <person name="Skuce C."/>
            <person name="Pandian R."/>
            <person name="Andrews R."/>
            <person name="Harrison E."/>
            <person name="Kimberley A."/>
            <person name="Garnett J."/>
            <person name="Fosker N."/>
            <person name="Hall R."/>
            <person name="Garner P."/>
            <person name="Kelly D."/>
            <person name="Bird C."/>
            <person name="Palmer S."/>
            <person name="Gehring I."/>
            <person name="Berger A."/>
            <person name="Dooley C.M."/>
            <person name="Ersan-Urun Z."/>
            <person name="Eser C."/>
            <person name="Geiger H."/>
            <person name="Geisler M."/>
            <person name="Karotki L."/>
            <person name="Kirn A."/>
            <person name="Konantz J."/>
            <person name="Konantz M."/>
            <person name="Oberlander M."/>
            <person name="Rudolph-Geiger S."/>
            <person name="Teucke M."/>
            <person name="Lanz C."/>
            <person name="Raddatz G."/>
            <person name="Osoegawa K."/>
            <person name="Zhu B."/>
            <person name="Rapp A."/>
            <person name="Widaa S."/>
            <person name="Langford C."/>
            <person name="Yang F."/>
            <person name="Schuster S.C."/>
            <person name="Carter N.P."/>
            <person name="Harrow J."/>
            <person name="Ning Z."/>
            <person name="Herrero J."/>
            <person name="Searle S.M."/>
            <person name="Enright A."/>
            <person name="Geisler R."/>
            <person name="Plasterk R.H."/>
            <person name="Lee C."/>
            <person name="Westerfield M."/>
            <person name="de Jong P.J."/>
            <person name="Zon L.I."/>
            <person name="Postlethwait J.H."/>
            <person name="Nusslein-Volhard C."/>
            <person name="Hubbard T.J."/>
            <person name="Roest Crollius H."/>
            <person name="Rogers J."/>
            <person name="Stemple D.L."/>
        </authorList>
    </citation>
    <scope>NUCLEOTIDE SEQUENCE [LARGE SCALE GENOMIC DNA]</scope>
    <source>
        <strain evidence="9">Tuebingen</strain>
    </source>
</reference>
<reference evidence="8" key="2">
    <citation type="submission" date="2008-04" db="EMBL/GenBank/DDBJ databases">
        <authorList>
            <consortium name="NIH - Zebrafish Gene Collection (ZGC) project"/>
        </authorList>
    </citation>
    <scope>NUCLEOTIDE SEQUENCE [LARGE SCALE MRNA]</scope>
</reference>
<reference evidence="7" key="3">
    <citation type="journal article" date="2013" name="Brain">
        <title>A zebrafish model of CLN2 disease is deficient in tripeptidyl peptidase 1 and displays progressive neurodegeneration accompanied by a reduction in proliferation.</title>
        <authorList>
            <person name="Mahmood F."/>
            <person name="Fu S."/>
            <person name="Cooke J."/>
            <person name="Wilson S.W."/>
            <person name="Cooper J.D."/>
            <person name="Russell C."/>
        </authorList>
    </citation>
    <scope>FUNCTION</scope>
    <scope>CATALYTIC ACTIVITY</scope>
    <scope>DEVELOPMENTAL STAGE</scope>
    <scope>DISRUPTION PHENOTYPE</scope>
    <scope>MUTAGENESIS OF 40-LEU--ASP-557 AND 444-TYR--ASP-557</scope>
</reference>
<protein>
    <recommendedName>
        <fullName evidence="6">Tripeptidyl-peptidase 1</fullName>
        <shortName evidence="6">TPP-1</shortName>
        <ecNumber evidence="5">3.4.14.9</ecNumber>
    </recommendedName>
    <alternativeName>
        <fullName>Tripeptidyl aminopeptidase</fullName>
    </alternativeName>
    <alternativeName>
        <fullName>Tripeptidyl-peptidase I</fullName>
        <shortName>TPP-I</shortName>
    </alternativeName>
</protein>
<gene>
    <name evidence="6" type="primary">tpp1</name>
</gene>
<organism evidence="9">
    <name type="scientific">Danio rerio</name>
    <name type="common">Zebrafish</name>
    <name type="synonym">Brachydanio rerio</name>
    <dbReference type="NCBI Taxonomy" id="7955"/>
    <lineage>
        <taxon>Eukaryota</taxon>
        <taxon>Metazoa</taxon>
        <taxon>Chordata</taxon>
        <taxon>Craniata</taxon>
        <taxon>Vertebrata</taxon>
        <taxon>Euteleostomi</taxon>
        <taxon>Actinopterygii</taxon>
        <taxon>Neopterygii</taxon>
        <taxon>Teleostei</taxon>
        <taxon>Ostariophysi</taxon>
        <taxon>Cypriniformes</taxon>
        <taxon>Danionidae</taxon>
        <taxon>Danioninae</taxon>
        <taxon>Danio</taxon>
    </lineage>
</organism>
<proteinExistence type="evidence at protein level"/>
<accession>F8W2M8</accession>
<accession>B3DIE8</accession>
<dbReference type="EC" id="3.4.14.9" evidence="5"/>
<dbReference type="EMBL" id="BX546455">
    <property type="status" value="NOT_ANNOTATED_CDS"/>
    <property type="molecule type" value="Genomic_DNA"/>
</dbReference>
<dbReference type="EMBL" id="BC163102">
    <property type="protein sequence ID" value="AAI63102.1"/>
    <property type="molecule type" value="mRNA"/>
</dbReference>
<dbReference type="RefSeq" id="NP_001122270.1">
    <property type="nucleotide sequence ID" value="NM_001128798.1"/>
</dbReference>
<dbReference type="SMR" id="F8W2M8"/>
<dbReference type="FunCoup" id="F8W2M8">
    <property type="interactions" value="451"/>
</dbReference>
<dbReference type="STRING" id="7955.ENSDARP00000124672"/>
<dbReference type="MEROPS" id="S53.008"/>
<dbReference type="GlyCosmos" id="F8W2M8">
    <property type="glycosylation" value="6 sites, No reported glycans"/>
</dbReference>
<dbReference type="PaxDb" id="7955-ENSDARP00000124672"/>
<dbReference type="GeneID" id="798347"/>
<dbReference type="KEGG" id="dre:798347"/>
<dbReference type="AGR" id="ZFIN:ZDB-GENE-030131-6654"/>
<dbReference type="CTD" id="1200"/>
<dbReference type="ZFIN" id="ZDB-GENE-030131-6654">
    <property type="gene designation" value="tpp1"/>
</dbReference>
<dbReference type="eggNOG" id="ENOG502QR6D">
    <property type="taxonomic scope" value="Eukaryota"/>
</dbReference>
<dbReference type="HOGENOM" id="CLU_013783_5_1_1"/>
<dbReference type="InParanoid" id="F8W2M8"/>
<dbReference type="OrthoDB" id="2919105at2759"/>
<dbReference type="PhylomeDB" id="F8W2M8"/>
<dbReference type="TreeFam" id="TF333497"/>
<dbReference type="PRO" id="PR:F8W2M8"/>
<dbReference type="Proteomes" id="UP000000437">
    <property type="component" value="Chromosome 17"/>
</dbReference>
<dbReference type="GO" id="GO:0005764">
    <property type="term" value="C:lysosome"/>
    <property type="evidence" value="ECO:0007669"/>
    <property type="project" value="UniProtKB-SubCell"/>
</dbReference>
<dbReference type="GO" id="GO:0004175">
    <property type="term" value="F:endopeptidase activity"/>
    <property type="evidence" value="ECO:0000318"/>
    <property type="project" value="GO_Central"/>
</dbReference>
<dbReference type="GO" id="GO:0046872">
    <property type="term" value="F:metal ion binding"/>
    <property type="evidence" value="ECO:0007669"/>
    <property type="project" value="UniProtKB-KW"/>
</dbReference>
<dbReference type="GO" id="GO:0004252">
    <property type="term" value="F:serine-type endopeptidase activity"/>
    <property type="evidence" value="ECO:0007669"/>
    <property type="project" value="InterPro"/>
</dbReference>
<dbReference type="GO" id="GO:0008240">
    <property type="term" value="F:tripeptidyl-peptidase activity"/>
    <property type="evidence" value="ECO:0000250"/>
    <property type="project" value="ZFIN"/>
</dbReference>
<dbReference type="GO" id="GO:0007417">
    <property type="term" value="P:central nervous system development"/>
    <property type="evidence" value="ECO:0000315"/>
    <property type="project" value="ZFIN"/>
</dbReference>
<dbReference type="GO" id="GO:0007626">
    <property type="term" value="P:locomotory behavior"/>
    <property type="evidence" value="ECO:0000315"/>
    <property type="project" value="ZFIN"/>
</dbReference>
<dbReference type="GO" id="GO:0022008">
    <property type="term" value="P:neurogenesis"/>
    <property type="evidence" value="ECO:0000315"/>
    <property type="project" value="ZFIN"/>
</dbReference>
<dbReference type="GO" id="GO:0006508">
    <property type="term" value="P:proteolysis"/>
    <property type="evidence" value="ECO:0000318"/>
    <property type="project" value="GO_Central"/>
</dbReference>
<dbReference type="CDD" id="cd04056">
    <property type="entry name" value="Peptidases_S53"/>
    <property type="match status" value="1"/>
</dbReference>
<dbReference type="CDD" id="cd11377">
    <property type="entry name" value="Pro-peptidase_S53"/>
    <property type="match status" value="1"/>
</dbReference>
<dbReference type="FunFam" id="3.40.50.200:FF:000012">
    <property type="entry name" value="Tripeptidyl-peptidase 1 preproprotein"/>
    <property type="match status" value="1"/>
</dbReference>
<dbReference type="Gene3D" id="3.40.50.200">
    <property type="entry name" value="Peptidase S8/S53 domain"/>
    <property type="match status" value="1"/>
</dbReference>
<dbReference type="InterPro" id="IPR000209">
    <property type="entry name" value="Peptidase_S8/S53_dom"/>
</dbReference>
<dbReference type="InterPro" id="IPR036852">
    <property type="entry name" value="Peptidase_S8/S53_dom_sf"/>
</dbReference>
<dbReference type="InterPro" id="IPR015366">
    <property type="entry name" value="S53_propep"/>
</dbReference>
<dbReference type="InterPro" id="IPR030400">
    <property type="entry name" value="Sedolisin_dom"/>
</dbReference>
<dbReference type="InterPro" id="IPR050819">
    <property type="entry name" value="Tripeptidyl-peptidase_I"/>
</dbReference>
<dbReference type="PANTHER" id="PTHR14218">
    <property type="entry name" value="PROTEASE S8 TRIPEPTIDYL PEPTIDASE I CLN2"/>
    <property type="match status" value="1"/>
</dbReference>
<dbReference type="PANTHER" id="PTHR14218:SF15">
    <property type="entry name" value="TRIPEPTIDYL-PEPTIDASE 1"/>
    <property type="match status" value="1"/>
</dbReference>
<dbReference type="Pfam" id="PF00082">
    <property type="entry name" value="Peptidase_S8"/>
    <property type="match status" value="1"/>
</dbReference>
<dbReference type="Pfam" id="PF09286">
    <property type="entry name" value="Pro-kuma_activ"/>
    <property type="match status" value="1"/>
</dbReference>
<dbReference type="SMART" id="SM00944">
    <property type="entry name" value="Pro-kuma_activ"/>
    <property type="match status" value="1"/>
</dbReference>
<dbReference type="SUPFAM" id="SSF54897">
    <property type="entry name" value="Protease propeptides/inhibitors"/>
    <property type="match status" value="1"/>
</dbReference>
<dbReference type="SUPFAM" id="SSF52743">
    <property type="entry name" value="Subtilisin-like"/>
    <property type="match status" value="1"/>
</dbReference>
<dbReference type="PROSITE" id="PS51695">
    <property type="entry name" value="SEDOLISIN"/>
    <property type="match status" value="1"/>
</dbReference>
<sequence length="557" mass="61539">MRVAVFVLSFIWLVNGELLEADQDAVVPGDWTFLGRVGPLEEVELTFALKQQNVSKMEELLKLVSDPDSHQYGKYLSLDEVAALSRPSPLTEKVVENWLRSHGVMDCHTIITRDFLQCVMTVEVAEALLPGSKFHRFSKNTKTLLRSTSQYSVHEDVHQHLDFVGGVHRFPQKRKIVSKGWEGARQAILGYHLGVTPAVIRNRYNLTAKDVGTAANNSQAVAQFLEQYYHPADLAEFMSLFGGGFTHMSTVERVVGTQGGGKAGIEASLDVEYIMSSGANISTWVFTNPGRHESQEPFLQWMLLLSNMSAVPWVHTISYGDDEDSLSEAYMNRINIEFMKAGLRGISMLFASGDSGAGCRHLTKERNTFRPSFPASSPYVTTVGGTSFQNPFKLSYEVTDYISGGGFSNVFPMPDYQVDAVRAYLKSVQSLPPQTYFNTTGRAYPDLAALSDNYWVVSNRVPIPWVSGTSASTPVVGGILSLINDQRFLKGLPALGFINPRLYKMQGKGLYDVTVGCHLSCLDDKVEGKGFCASPSWDPVTGWGTPNYPVFLASLMD</sequence>